<accession>Q08DG4</accession>
<keyword id="KW-1185">Reference proteome</keyword>
<keyword id="KW-0833">Ubl conjugation pathway</keyword>
<comment type="function">
    <text evidence="1">Substrate-recognition component of the SCF (SKP1-CUL1-F-box protein)-type E3 ubiquitin ligase complex.</text>
</comment>
<comment type="subunit">
    <text evidence="1">Directly interacts with SKP1 and CUL1.</text>
</comment>
<comment type="caution">
    <text evidence="3">While the gene symbol and protein names are indicative of the presence of LRR repeats, such repeats are not present in this protein.</text>
</comment>
<organism>
    <name type="scientific">Bos taurus</name>
    <name type="common">Bovine</name>
    <dbReference type="NCBI Taxonomy" id="9913"/>
    <lineage>
        <taxon>Eukaryota</taxon>
        <taxon>Metazoa</taxon>
        <taxon>Chordata</taxon>
        <taxon>Craniata</taxon>
        <taxon>Vertebrata</taxon>
        <taxon>Euteleostomi</taxon>
        <taxon>Mammalia</taxon>
        <taxon>Eutheria</taxon>
        <taxon>Laurasiatheria</taxon>
        <taxon>Artiodactyla</taxon>
        <taxon>Ruminantia</taxon>
        <taxon>Pecora</taxon>
        <taxon>Bovidae</taxon>
        <taxon>Bovinae</taxon>
        <taxon>Bos</taxon>
    </lineage>
</organism>
<evidence type="ECO:0000250" key="1"/>
<evidence type="ECO:0000255" key="2">
    <source>
        <dbReference type="PROSITE-ProRule" id="PRU00080"/>
    </source>
</evidence>
<evidence type="ECO:0000305" key="3"/>
<gene>
    <name type="primary">FBXL8</name>
</gene>
<feature type="chain" id="PRO_0000274488" description="F-box/LRR-repeat protein 8">
    <location>
        <begin position="1"/>
        <end position="374"/>
    </location>
</feature>
<feature type="domain" description="F-box" evidence="2">
    <location>
        <begin position="2"/>
        <end position="48"/>
    </location>
</feature>
<dbReference type="EMBL" id="BC123762">
    <property type="protein sequence ID" value="AAI23763.1"/>
    <property type="molecule type" value="mRNA"/>
</dbReference>
<dbReference type="RefSeq" id="NP_001070405.1">
    <property type="nucleotide sequence ID" value="NM_001076937.1"/>
</dbReference>
<dbReference type="SMR" id="Q08DG4"/>
<dbReference type="FunCoup" id="Q08DG4">
    <property type="interactions" value="156"/>
</dbReference>
<dbReference type="STRING" id="9913.ENSBTAP00000032274"/>
<dbReference type="PaxDb" id="9913-ENSBTAP00000032274"/>
<dbReference type="GeneID" id="614765"/>
<dbReference type="KEGG" id="bta:614765"/>
<dbReference type="CTD" id="55336"/>
<dbReference type="eggNOG" id="ENOG502QU59">
    <property type="taxonomic scope" value="Eukaryota"/>
</dbReference>
<dbReference type="InParanoid" id="Q08DG4"/>
<dbReference type="OrthoDB" id="3219396at2759"/>
<dbReference type="Proteomes" id="UP000009136">
    <property type="component" value="Unplaced"/>
</dbReference>
<dbReference type="FunFam" id="1.20.1280.50:FF:000005">
    <property type="entry name" value="F-box/LRR-repeat protein 3 isoform X1"/>
    <property type="match status" value="1"/>
</dbReference>
<dbReference type="FunFam" id="3.80.10.10:FF:000260">
    <property type="entry name" value="F-box/LRR-repeat protein 8"/>
    <property type="match status" value="1"/>
</dbReference>
<dbReference type="Gene3D" id="1.20.1280.50">
    <property type="match status" value="1"/>
</dbReference>
<dbReference type="Gene3D" id="3.80.10.10">
    <property type="entry name" value="Ribonuclease Inhibitor"/>
    <property type="match status" value="1"/>
</dbReference>
<dbReference type="InterPro" id="IPR036047">
    <property type="entry name" value="F-box-like_dom_sf"/>
</dbReference>
<dbReference type="InterPro" id="IPR001810">
    <property type="entry name" value="F-box_dom"/>
</dbReference>
<dbReference type="InterPro" id="IPR032675">
    <property type="entry name" value="LRR_dom_sf"/>
</dbReference>
<dbReference type="PANTHER" id="PTHR20872">
    <property type="match status" value="1"/>
</dbReference>
<dbReference type="PANTHER" id="PTHR20872:SF1">
    <property type="entry name" value="F-BOX DOMAIN-CONTAINING PROTEIN"/>
    <property type="match status" value="1"/>
</dbReference>
<dbReference type="Pfam" id="PF12937">
    <property type="entry name" value="F-box-like"/>
    <property type="match status" value="1"/>
</dbReference>
<dbReference type="SMART" id="SM00256">
    <property type="entry name" value="FBOX"/>
    <property type="match status" value="1"/>
</dbReference>
<dbReference type="SUPFAM" id="SSF81383">
    <property type="entry name" value="F-box domain"/>
    <property type="match status" value="1"/>
</dbReference>
<dbReference type="SUPFAM" id="SSF52047">
    <property type="entry name" value="RNI-like"/>
    <property type="match status" value="1"/>
</dbReference>
<dbReference type="PROSITE" id="PS50181">
    <property type="entry name" value="FBOX"/>
    <property type="match status" value="1"/>
</dbReference>
<proteinExistence type="evidence at transcript level"/>
<reference key="1">
    <citation type="submission" date="2006-09" db="EMBL/GenBank/DDBJ databases">
        <authorList>
            <consortium name="NIH - Mammalian Gene Collection (MGC) project"/>
        </authorList>
    </citation>
    <scope>NUCLEOTIDE SEQUENCE [LARGE SCALE MRNA]</scope>
    <source>
        <strain>Hereford</strain>
        <tissue>Ascending colon</tissue>
    </source>
</reference>
<sequence>MAEPGEQLPEEVLALIFRHLPLPDRAAAARVCRAWAAAATCSAVWHDTSISCDCELEGMLPPYLSACLDHVQNLWLEFEPSRKSSRRAATDLLTALTGRTPGLRGLCLECRGEKPLFDAGRDVLDAVHALCGAASALRHLDLRRLPFSLDDALVLQVAHGCPELRSLFLDNRTLVGSVGPGSVLELLEACPCLRALGLHLASLSRTALEALAAPERAPFELLALRCACPEDARAPPLPDEAWAALSLRHPGLQVELELEPVLPAESVTRVLQPAVPVATLRLSLSGDTVGPVRFAARHYAATLRALEVRAAASAELDAALEELAARCARLREVHCFCVVRPSVLHAFRARCPRLRSYTLKVTREPHPWRPTLVA</sequence>
<name>FBXL8_BOVIN</name>
<protein>
    <recommendedName>
        <fullName>F-box/LRR-repeat protein 8</fullName>
    </recommendedName>
    <alternativeName>
        <fullName>F-box and leucine-rich repeat protein 8</fullName>
    </alternativeName>
</protein>